<dbReference type="EC" id="3.5.4.16" evidence="1"/>
<dbReference type="EMBL" id="CP000109">
    <property type="protein sequence ID" value="ABB42465.1"/>
    <property type="status" value="ALT_INIT"/>
    <property type="molecule type" value="Genomic_DNA"/>
</dbReference>
<dbReference type="SMR" id="Q31EF8"/>
<dbReference type="STRING" id="317025.Tcr_1875"/>
<dbReference type="KEGG" id="tcx:Tcr_1875"/>
<dbReference type="eggNOG" id="COG1469">
    <property type="taxonomic scope" value="Bacteria"/>
</dbReference>
<dbReference type="HOGENOM" id="CLU_062816_0_0_6"/>
<dbReference type="UniPathway" id="UPA00848">
    <property type="reaction ID" value="UER00151"/>
</dbReference>
<dbReference type="GO" id="GO:0003934">
    <property type="term" value="F:GTP cyclohydrolase I activity"/>
    <property type="evidence" value="ECO:0007669"/>
    <property type="project" value="UniProtKB-UniRule"/>
</dbReference>
<dbReference type="GO" id="GO:0046654">
    <property type="term" value="P:tetrahydrofolate biosynthetic process"/>
    <property type="evidence" value="ECO:0007669"/>
    <property type="project" value="UniProtKB-UniRule"/>
</dbReference>
<dbReference type="Gene3D" id="3.10.270.10">
    <property type="entry name" value="Urate Oxidase"/>
    <property type="match status" value="1"/>
</dbReference>
<dbReference type="HAMAP" id="MF_01527_B">
    <property type="entry name" value="GTP_cyclohydrol_B"/>
    <property type="match status" value="1"/>
</dbReference>
<dbReference type="InterPro" id="IPR022838">
    <property type="entry name" value="GTP_cyclohydrolase_FolE2"/>
</dbReference>
<dbReference type="InterPro" id="IPR003801">
    <property type="entry name" value="GTP_cyclohydrolase_FolE2/MptA"/>
</dbReference>
<dbReference type="NCBIfam" id="NF010200">
    <property type="entry name" value="PRK13674.1-1"/>
    <property type="match status" value="1"/>
</dbReference>
<dbReference type="PANTHER" id="PTHR36445">
    <property type="entry name" value="GTP CYCLOHYDROLASE MPTA"/>
    <property type="match status" value="1"/>
</dbReference>
<dbReference type="PANTHER" id="PTHR36445:SF1">
    <property type="entry name" value="GTP CYCLOHYDROLASE MPTA"/>
    <property type="match status" value="1"/>
</dbReference>
<dbReference type="Pfam" id="PF02649">
    <property type="entry name" value="GCHY-1"/>
    <property type="match status" value="1"/>
</dbReference>
<comment type="function">
    <text evidence="1">Converts GTP to 7,8-dihydroneopterin triphosphate.</text>
</comment>
<comment type="catalytic activity">
    <reaction evidence="1">
        <text>GTP + H2O = 7,8-dihydroneopterin 3'-triphosphate + formate + H(+)</text>
        <dbReference type="Rhea" id="RHEA:17473"/>
        <dbReference type="ChEBI" id="CHEBI:15377"/>
        <dbReference type="ChEBI" id="CHEBI:15378"/>
        <dbReference type="ChEBI" id="CHEBI:15740"/>
        <dbReference type="ChEBI" id="CHEBI:37565"/>
        <dbReference type="ChEBI" id="CHEBI:58462"/>
        <dbReference type="EC" id="3.5.4.16"/>
    </reaction>
</comment>
<comment type="pathway">
    <text evidence="1">Cofactor biosynthesis; 7,8-dihydroneopterin triphosphate biosynthesis; 7,8-dihydroneopterin triphosphate from GTP: step 1/1.</text>
</comment>
<comment type="similarity">
    <text evidence="1">Belongs to the GTP cyclohydrolase IV family.</text>
</comment>
<comment type="sequence caution" evidence="2">
    <conflict type="erroneous initiation">
        <sequence resource="EMBL-CDS" id="ABB42465"/>
    </conflict>
</comment>
<gene>
    <name evidence="1" type="primary">folE2</name>
    <name type="ordered locus">Tcr_1875</name>
</gene>
<evidence type="ECO:0000255" key="1">
    <source>
        <dbReference type="HAMAP-Rule" id="MF_01527"/>
    </source>
</evidence>
<evidence type="ECO:0000305" key="2"/>
<reference key="1">
    <citation type="journal article" date="2006" name="PLoS Biol.">
        <title>The genome of deep-sea vent chemolithoautotroph Thiomicrospira crunogena XCL-2.</title>
        <authorList>
            <person name="Scott K.M."/>
            <person name="Sievert S.M."/>
            <person name="Abril F.N."/>
            <person name="Ball L.A."/>
            <person name="Barrett C.J."/>
            <person name="Blake R.A."/>
            <person name="Boller A.J."/>
            <person name="Chain P.S.G."/>
            <person name="Clark J.A."/>
            <person name="Davis C.R."/>
            <person name="Detter C."/>
            <person name="Do K.F."/>
            <person name="Dobrinski K.P."/>
            <person name="Faza B.I."/>
            <person name="Fitzpatrick K.A."/>
            <person name="Freyermuth S.K."/>
            <person name="Harmer T.L."/>
            <person name="Hauser L.J."/>
            <person name="Huegler M."/>
            <person name="Kerfeld C.A."/>
            <person name="Klotz M.G."/>
            <person name="Kong W.W."/>
            <person name="Land M."/>
            <person name="Lapidus A."/>
            <person name="Larimer F.W."/>
            <person name="Longo D.L."/>
            <person name="Lucas S."/>
            <person name="Malfatti S.A."/>
            <person name="Massey S.E."/>
            <person name="Martin D.D."/>
            <person name="McCuddin Z."/>
            <person name="Meyer F."/>
            <person name="Moore J.L."/>
            <person name="Ocampo L.H. Jr."/>
            <person name="Paul J.H."/>
            <person name="Paulsen I.T."/>
            <person name="Reep D.K."/>
            <person name="Ren Q."/>
            <person name="Ross R.L."/>
            <person name="Sato P.Y."/>
            <person name="Thomas P."/>
            <person name="Tinkham L.E."/>
            <person name="Zeruth G.T."/>
        </authorList>
    </citation>
    <scope>NUCLEOTIDE SEQUENCE [LARGE SCALE GENOMIC DNA]</scope>
    <source>
        <strain>DSM 25203 / XCL-2</strain>
    </source>
</reference>
<proteinExistence type="inferred from homology"/>
<name>GCH4_HYDCU</name>
<accession>Q31EF8</accession>
<sequence length="311" mass="35302">MPDIACQPHQDPQGKLNWVGMSGIELPIKIEQDSQTLTLSSQVQAYVSLDDPLSKGIHMSRLYLILDEMGSNAPLNPASIQTLLTAFIESHQGLSQNAFVEFRFDYYERRRSLKSDNSGWKHYPCTLRGEMRNGQFECEISISVPYSSTCPCSAALSRQLIQEAFEQQFNGQDLDYNQVLEWLGTPEGICATPHSQRSYAQVKLKVNAEHPLNLSNVINQIEDAVKTPVQSTVKREDEQEFARLNATNLMFCEDAARRLQAKLESCPEYKDYWVRVNHLESLHPHDAVAIVTKNVPGGYSDEPNFMERFQN</sequence>
<keyword id="KW-0378">Hydrolase</keyword>
<protein>
    <recommendedName>
        <fullName evidence="1">GTP cyclohydrolase FolE2</fullName>
        <ecNumber evidence="1">3.5.4.16</ecNumber>
    </recommendedName>
</protein>
<organism>
    <name type="scientific">Hydrogenovibrio crunogenus (strain DSM 25203 / XCL-2)</name>
    <name type="common">Thiomicrospira crunogena</name>
    <dbReference type="NCBI Taxonomy" id="317025"/>
    <lineage>
        <taxon>Bacteria</taxon>
        <taxon>Pseudomonadati</taxon>
        <taxon>Pseudomonadota</taxon>
        <taxon>Gammaproteobacteria</taxon>
        <taxon>Thiotrichales</taxon>
        <taxon>Piscirickettsiaceae</taxon>
        <taxon>Hydrogenovibrio</taxon>
    </lineage>
</organism>
<feature type="chain" id="PRO_0000289530" description="GTP cyclohydrolase FolE2">
    <location>
        <begin position="1"/>
        <end position="311"/>
    </location>
</feature>
<feature type="site" description="May be catalytically important" evidence="1">
    <location>
        <position position="150"/>
    </location>
</feature>